<feature type="chain" id="PRO_0000116427" description="Uncharacterized protein C12G12.07c">
    <location>
        <begin position="1"/>
        <end position="412"/>
    </location>
</feature>
<feature type="region of interest" description="Disordered" evidence="1">
    <location>
        <begin position="1"/>
        <end position="20"/>
    </location>
</feature>
<feature type="region of interest" description="Disordered" evidence="1">
    <location>
        <begin position="223"/>
        <end position="243"/>
    </location>
</feature>
<feature type="region of interest" description="Disordered" evidence="1">
    <location>
        <begin position="310"/>
        <end position="412"/>
    </location>
</feature>
<feature type="compositionally biased region" description="Polar residues" evidence="1">
    <location>
        <begin position="1"/>
        <end position="17"/>
    </location>
</feature>
<feature type="compositionally biased region" description="Polar residues" evidence="1">
    <location>
        <begin position="340"/>
        <end position="355"/>
    </location>
</feature>
<feature type="compositionally biased region" description="Gly residues" evidence="1">
    <location>
        <begin position="361"/>
        <end position="379"/>
    </location>
</feature>
<feature type="compositionally biased region" description="Low complexity" evidence="1">
    <location>
        <begin position="390"/>
        <end position="402"/>
    </location>
</feature>
<feature type="compositionally biased region" description="Polar residues" evidence="1">
    <location>
        <begin position="403"/>
        <end position="412"/>
    </location>
</feature>
<evidence type="ECO:0000256" key="1">
    <source>
        <dbReference type="SAM" id="MobiDB-lite"/>
    </source>
</evidence>
<gene>
    <name type="ORF">SPAC12G12.07c</name>
</gene>
<organism>
    <name type="scientific">Schizosaccharomyces pombe (strain 972 / ATCC 24843)</name>
    <name type="common">Fission yeast</name>
    <dbReference type="NCBI Taxonomy" id="284812"/>
    <lineage>
        <taxon>Eukaryota</taxon>
        <taxon>Fungi</taxon>
        <taxon>Dikarya</taxon>
        <taxon>Ascomycota</taxon>
        <taxon>Taphrinomycotina</taxon>
        <taxon>Schizosaccharomycetes</taxon>
        <taxon>Schizosaccharomycetales</taxon>
        <taxon>Schizosaccharomycetaceae</taxon>
        <taxon>Schizosaccharomyces</taxon>
    </lineage>
</organism>
<accession>Q09871</accession>
<dbReference type="EMBL" id="CU329670">
    <property type="protein sequence ID" value="CAA91502.1"/>
    <property type="molecule type" value="Genomic_DNA"/>
</dbReference>
<dbReference type="PIR" id="S62538">
    <property type="entry name" value="S62538"/>
</dbReference>
<dbReference type="SMR" id="Q09871"/>
<dbReference type="BioGRID" id="279404">
    <property type="interactions" value="36"/>
</dbReference>
<dbReference type="STRING" id="284812.Q09871"/>
<dbReference type="iPTMnet" id="Q09871"/>
<dbReference type="PaxDb" id="4896-SPAC12G12.07c.1"/>
<dbReference type="EnsemblFungi" id="SPAC12G12.07c.1">
    <property type="protein sequence ID" value="SPAC12G12.07c.1:pep"/>
    <property type="gene ID" value="SPAC12G12.07c"/>
</dbReference>
<dbReference type="KEGG" id="spo:2542964"/>
<dbReference type="PomBase" id="SPAC12G12.07c"/>
<dbReference type="VEuPathDB" id="FungiDB:SPAC12G12.07c"/>
<dbReference type="HOGENOM" id="CLU_687282_0_0_1"/>
<dbReference type="InParanoid" id="Q09871"/>
<dbReference type="OMA" id="EEAWVDD"/>
<dbReference type="PRO" id="PR:Q09871"/>
<dbReference type="Proteomes" id="UP000002485">
    <property type="component" value="Chromosome I"/>
</dbReference>
<dbReference type="GO" id="GO:0005829">
    <property type="term" value="C:cytosol"/>
    <property type="evidence" value="ECO:0007005"/>
    <property type="project" value="PomBase"/>
</dbReference>
<dbReference type="PANTHER" id="PTHR37736">
    <property type="entry name" value="GLYCINE-RICH PROTEIN"/>
    <property type="match status" value="1"/>
</dbReference>
<dbReference type="PANTHER" id="PTHR37736:SF1">
    <property type="entry name" value="GLYCINE-RICH PROTEIN"/>
    <property type="match status" value="1"/>
</dbReference>
<keyword id="KW-1185">Reference proteome</keyword>
<sequence length="412" mass="45724">MPSQGNNKNSENITQNPIEGELGSVIVEHLTKRIRNFTKKKQKILKLEEIAASDSNSLNDDQRKALQGKDAVLTTLNELKELLSQIDATRIRDEKHKRQFEATENAKRKEEIEAQYREGYDTAQKQVSSLVRFLRFASHNCVHPSDDAPFNSAVEKLLVIVYEGTEKSEKAVADLNDSSTDVVPESEVSFQTISSRVDNFFAAPLPSEQAEELIEDDYAEQPEQAVGQPIEQQSISDDEARQTNRPLNRGIQFLNESEIEGQHVEEPALPSETSVPANSTLQVPTENVEVDVLGKDGTNIYPTQNQVVEQKQMQQKLDSMSPEWYQAADPSNGVVDGTPKLNSNTRGSSKRPSVNRSQGSGQRGRGGRGFYRGGRGRGGFFNRSKRGQYSNSNNSTSQPSPNAELSNFNPVA</sequence>
<proteinExistence type="predicted"/>
<reference key="1">
    <citation type="journal article" date="2002" name="Nature">
        <title>The genome sequence of Schizosaccharomyces pombe.</title>
        <authorList>
            <person name="Wood V."/>
            <person name="Gwilliam R."/>
            <person name="Rajandream M.A."/>
            <person name="Lyne M.H."/>
            <person name="Lyne R."/>
            <person name="Stewart A."/>
            <person name="Sgouros J.G."/>
            <person name="Peat N."/>
            <person name="Hayles J."/>
            <person name="Baker S.G."/>
            <person name="Basham D."/>
            <person name="Bowman S."/>
            <person name="Brooks K."/>
            <person name="Brown D."/>
            <person name="Brown S."/>
            <person name="Chillingworth T."/>
            <person name="Churcher C.M."/>
            <person name="Collins M."/>
            <person name="Connor R."/>
            <person name="Cronin A."/>
            <person name="Davis P."/>
            <person name="Feltwell T."/>
            <person name="Fraser A."/>
            <person name="Gentles S."/>
            <person name="Goble A."/>
            <person name="Hamlin N."/>
            <person name="Harris D.E."/>
            <person name="Hidalgo J."/>
            <person name="Hodgson G."/>
            <person name="Holroyd S."/>
            <person name="Hornsby T."/>
            <person name="Howarth S."/>
            <person name="Huckle E.J."/>
            <person name="Hunt S."/>
            <person name="Jagels K."/>
            <person name="James K.D."/>
            <person name="Jones L."/>
            <person name="Jones M."/>
            <person name="Leather S."/>
            <person name="McDonald S."/>
            <person name="McLean J."/>
            <person name="Mooney P."/>
            <person name="Moule S."/>
            <person name="Mungall K.L."/>
            <person name="Murphy L.D."/>
            <person name="Niblett D."/>
            <person name="Odell C."/>
            <person name="Oliver K."/>
            <person name="O'Neil S."/>
            <person name="Pearson D."/>
            <person name="Quail M.A."/>
            <person name="Rabbinowitsch E."/>
            <person name="Rutherford K.M."/>
            <person name="Rutter S."/>
            <person name="Saunders D."/>
            <person name="Seeger K."/>
            <person name="Sharp S."/>
            <person name="Skelton J."/>
            <person name="Simmonds M.N."/>
            <person name="Squares R."/>
            <person name="Squares S."/>
            <person name="Stevens K."/>
            <person name="Taylor K."/>
            <person name="Taylor R.G."/>
            <person name="Tivey A."/>
            <person name="Walsh S.V."/>
            <person name="Warren T."/>
            <person name="Whitehead S."/>
            <person name="Woodward J.R."/>
            <person name="Volckaert G."/>
            <person name="Aert R."/>
            <person name="Robben J."/>
            <person name="Grymonprez B."/>
            <person name="Weltjens I."/>
            <person name="Vanstreels E."/>
            <person name="Rieger M."/>
            <person name="Schaefer M."/>
            <person name="Mueller-Auer S."/>
            <person name="Gabel C."/>
            <person name="Fuchs M."/>
            <person name="Duesterhoeft A."/>
            <person name="Fritzc C."/>
            <person name="Holzer E."/>
            <person name="Moestl D."/>
            <person name="Hilbert H."/>
            <person name="Borzym K."/>
            <person name="Langer I."/>
            <person name="Beck A."/>
            <person name="Lehrach H."/>
            <person name="Reinhardt R."/>
            <person name="Pohl T.M."/>
            <person name="Eger P."/>
            <person name="Zimmermann W."/>
            <person name="Wedler H."/>
            <person name="Wambutt R."/>
            <person name="Purnelle B."/>
            <person name="Goffeau A."/>
            <person name="Cadieu E."/>
            <person name="Dreano S."/>
            <person name="Gloux S."/>
            <person name="Lelaure V."/>
            <person name="Mottier S."/>
            <person name="Galibert F."/>
            <person name="Aves S.J."/>
            <person name="Xiang Z."/>
            <person name="Hunt C."/>
            <person name="Moore K."/>
            <person name="Hurst S.M."/>
            <person name="Lucas M."/>
            <person name="Rochet M."/>
            <person name="Gaillardin C."/>
            <person name="Tallada V.A."/>
            <person name="Garzon A."/>
            <person name="Thode G."/>
            <person name="Daga R.R."/>
            <person name="Cruzado L."/>
            <person name="Jimenez J."/>
            <person name="Sanchez M."/>
            <person name="del Rey F."/>
            <person name="Benito J."/>
            <person name="Dominguez A."/>
            <person name="Revuelta J.L."/>
            <person name="Moreno S."/>
            <person name="Armstrong J."/>
            <person name="Forsburg S.L."/>
            <person name="Cerutti L."/>
            <person name="Lowe T."/>
            <person name="McCombie W.R."/>
            <person name="Paulsen I."/>
            <person name="Potashkin J."/>
            <person name="Shpakovski G.V."/>
            <person name="Ussery D."/>
            <person name="Barrell B.G."/>
            <person name="Nurse P."/>
        </authorList>
    </citation>
    <scope>NUCLEOTIDE SEQUENCE [LARGE SCALE GENOMIC DNA]</scope>
    <source>
        <strain>972 / ATCC 24843</strain>
    </source>
</reference>
<protein>
    <recommendedName>
        <fullName>Uncharacterized protein C12G12.07c</fullName>
    </recommendedName>
</protein>
<name>YAG7_SCHPO</name>